<name>SYYC_PONAB</name>
<accession>Q5R8T5</accession>
<sequence length="528" mass="59167">MGDAPSPEEKLHLITRNLQEVLGEEKLKEILKERELKIYWGTATTGKPHVAYFVPMSKIADFLKAGCEVTILFADLHAYLDNMKAPWELLELRVSYYENVIKAMLESIGVPLEKLTFIKGTDYQLSKEYTLDVYRLSSVVTQHDSKKAGAEVVKQVEHPLLSGLLYPGLQALDEEYLKVDAQFGGVDQRKIFTFAEKYLPALGYSKRVHLMNPMVPGLTGSKMSSSEEESKIDLLDRKEDVKKKLKKAFCEPGNVENNGVLSFIKHVLFPLKSEFVILRDERWGGNKTYTAYMDLEKDFAAEVVHPGDLKNSVDVALNKLLDPIREKFNTPALKKLASAAYPDPSKQKPMAKGPAKNSEPEEVIPSRLDIRVGKIITVEKHPDADSLYVEKIDVGEAEPRTVVSGLVQFVPKEELQDRLVVVLCNLKPQKMRGVESQGMLLCASIEGINRQVEPLDPPAGSAPGERVFVKGYEKGQPDEELKPKKKVFEKLQADFKISEECIAQWKQTNFMTKLGSISCKSLKGGNIS</sequence>
<proteinExistence type="evidence at transcript level"/>
<gene>
    <name type="primary">YARS1</name>
    <name type="synonym">YARS</name>
</gene>
<protein>
    <recommendedName>
        <fullName>Tyrosine--tRNA ligase, cytoplasmic</fullName>
        <ecNumber evidence="1">6.1.1.1</ecNumber>
    </recommendedName>
    <alternativeName>
        <fullName>Tyrosyl-tRNA synthetase</fullName>
        <shortName>TyrRS</shortName>
    </alternativeName>
    <component>
        <recommendedName>
            <fullName>Tyrosine--tRNA ligase, cytoplasmic, N-terminally processed</fullName>
        </recommendedName>
    </component>
</protein>
<dbReference type="EC" id="6.1.1.1" evidence="1"/>
<dbReference type="EMBL" id="CR859664">
    <property type="protein sequence ID" value="CAH91825.1"/>
    <property type="molecule type" value="mRNA"/>
</dbReference>
<dbReference type="RefSeq" id="NP_001126056.1">
    <property type="nucleotide sequence ID" value="NM_001132584.2"/>
</dbReference>
<dbReference type="SMR" id="Q5R8T5"/>
<dbReference type="FunCoup" id="Q5R8T5">
    <property type="interactions" value="2341"/>
</dbReference>
<dbReference type="STRING" id="9601.ENSPPYP00000001828"/>
<dbReference type="GeneID" id="100173008"/>
<dbReference type="KEGG" id="pon:100173008"/>
<dbReference type="CTD" id="8565"/>
<dbReference type="eggNOG" id="KOG2144">
    <property type="taxonomic scope" value="Eukaryota"/>
</dbReference>
<dbReference type="eggNOG" id="KOG2241">
    <property type="taxonomic scope" value="Eukaryota"/>
</dbReference>
<dbReference type="InParanoid" id="Q5R8T5"/>
<dbReference type="OrthoDB" id="197206at2759"/>
<dbReference type="Proteomes" id="UP000001595">
    <property type="component" value="Unplaced"/>
</dbReference>
<dbReference type="GO" id="GO:0005829">
    <property type="term" value="C:cytosol"/>
    <property type="evidence" value="ECO:0000250"/>
    <property type="project" value="UniProtKB"/>
</dbReference>
<dbReference type="GO" id="GO:0005634">
    <property type="term" value="C:nucleus"/>
    <property type="evidence" value="ECO:0000250"/>
    <property type="project" value="UniProtKB"/>
</dbReference>
<dbReference type="GO" id="GO:0005524">
    <property type="term" value="F:ATP binding"/>
    <property type="evidence" value="ECO:0007669"/>
    <property type="project" value="UniProtKB-KW"/>
</dbReference>
<dbReference type="GO" id="GO:0036094">
    <property type="term" value="F:small molecule binding"/>
    <property type="evidence" value="ECO:0000250"/>
    <property type="project" value="UniProtKB"/>
</dbReference>
<dbReference type="GO" id="GO:0000049">
    <property type="term" value="F:tRNA binding"/>
    <property type="evidence" value="ECO:0007669"/>
    <property type="project" value="UniProtKB-KW"/>
</dbReference>
<dbReference type="GO" id="GO:0004831">
    <property type="term" value="F:tyrosine-tRNA ligase activity"/>
    <property type="evidence" value="ECO:0000250"/>
    <property type="project" value="UniProtKB"/>
</dbReference>
<dbReference type="GO" id="GO:0006437">
    <property type="term" value="P:tyrosyl-tRNA aminoacylation"/>
    <property type="evidence" value="ECO:0007669"/>
    <property type="project" value="InterPro"/>
</dbReference>
<dbReference type="CDD" id="cd02799">
    <property type="entry name" value="tRNA_bind_EMAP-II_like"/>
    <property type="match status" value="1"/>
</dbReference>
<dbReference type="CDD" id="cd00805">
    <property type="entry name" value="TyrRS_core"/>
    <property type="match status" value="1"/>
</dbReference>
<dbReference type="FunFam" id="1.10.240.10:FF:000004">
    <property type="entry name" value="Tyrosine--tRNA ligase"/>
    <property type="match status" value="1"/>
</dbReference>
<dbReference type="FunFam" id="3.40.50.620:FF:000040">
    <property type="entry name" value="Tyrosine--tRNA ligase"/>
    <property type="match status" value="1"/>
</dbReference>
<dbReference type="FunFam" id="2.40.50.140:FF:000047">
    <property type="entry name" value="tyrosine--tRNA ligase, cytoplasmic isoform X2"/>
    <property type="match status" value="1"/>
</dbReference>
<dbReference type="Gene3D" id="3.40.50.620">
    <property type="entry name" value="HUPs"/>
    <property type="match status" value="1"/>
</dbReference>
<dbReference type="Gene3D" id="2.40.50.140">
    <property type="entry name" value="Nucleic acid-binding proteins"/>
    <property type="match status" value="1"/>
</dbReference>
<dbReference type="Gene3D" id="1.10.240.10">
    <property type="entry name" value="Tyrosyl-Transfer RNA Synthetase"/>
    <property type="match status" value="1"/>
</dbReference>
<dbReference type="InterPro" id="IPR002305">
    <property type="entry name" value="aa-tRNA-synth_Ic"/>
</dbReference>
<dbReference type="InterPro" id="IPR012340">
    <property type="entry name" value="NA-bd_OB-fold"/>
</dbReference>
<dbReference type="InterPro" id="IPR014729">
    <property type="entry name" value="Rossmann-like_a/b/a_fold"/>
</dbReference>
<dbReference type="InterPro" id="IPR002547">
    <property type="entry name" value="tRNA-bd_dom"/>
</dbReference>
<dbReference type="InterPro" id="IPR002307">
    <property type="entry name" value="Tyr-tRNA-ligase"/>
</dbReference>
<dbReference type="InterPro" id="IPR051270">
    <property type="entry name" value="Tyrosine-tRNA_ligase_regulator"/>
</dbReference>
<dbReference type="NCBIfam" id="NF006330">
    <property type="entry name" value="PRK08560.1"/>
    <property type="match status" value="1"/>
</dbReference>
<dbReference type="NCBIfam" id="TIGR00234">
    <property type="entry name" value="tyrS"/>
    <property type="match status" value="1"/>
</dbReference>
<dbReference type="PANTHER" id="PTHR11586">
    <property type="entry name" value="TRNA-AMINOACYLATION COFACTOR ARC1 FAMILY MEMBER"/>
    <property type="match status" value="1"/>
</dbReference>
<dbReference type="PANTHER" id="PTHR11586:SF43">
    <property type="entry name" value="TYROSINE--TRNA LIGASE, CYTOPLASMIC"/>
    <property type="match status" value="1"/>
</dbReference>
<dbReference type="Pfam" id="PF00579">
    <property type="entry name" value="tRNA-synt_1b"/>
    <property type="match status" value="1"/>
</dbReference>
<dbReference type="Pfam" id="PF01588">
    <property type="entry name" value="tRNA_bind"/>
    <property type="match status" value="1"/>
</dbReference>
<dbReference type="PRINTS" id="PR01040">
    <property type="entry name" value="TRNASYNTHTYR"/>
</dbReference>
<dbReference type="SUPFAM" id="SSF50249">
    <property type="entry name" value="Nucleic acid-binding proteins"/>
    <property type="match status" value="1"/>
</dbReference>
<dbReference type="SUPFAM" id="SSF52374">
    <property type="entry name" value="Nucleotidylyl transferase"/>
    <property type="match status" value="1"/>
</dbReference>
<dbReference type="PROSITE" id="PS50886">
    <property type="entry name" value="TRBD"/>
    <property type="match status" value="1"/>
</dbReference>
<reference key="1">
    <citation type="submission" date="2004-11" db="EMBL/GenBank/DDBJ databases">
        <authorList>
            <consortium name="The German cDNA consortium"/>
        </authorList>
    </citation>
    <scope>NUCLEOTIDE SEQUENCE [LARGE SCALE MRNA]</scope>
    <source>
        <tissue>Brain cortex</tissue>
    </source>
</reference>
<organism>
    <name type="scientific">Pongo abelii</name>
    <name type="common">Sumatran orangutan</name>
    <name type="synonym">Pongo pygmaeus abelii</name>
    <dbReference type="NCBI Taxonomy" id="9601"/>
    <lineage>
        <taxon>Eukaryota</taxon>
        <taxon>Metazoa</taxon>
        <taxon>Chordata</taxon>
        <taxon>Craniata</taxon>
        <taxon>Vertebrata</taxon>
        <taxon>Euteleostomi</taxon>
        <taxon>Mammalia</taxon>
        <taxon>Eutheria</taxon>
        <taxon>Euarchontoglires</taxon>
        <taxon>Primates</taxon>
        <taxon>Haplorrhini</taxon>
        <taxon>Catarrhini</taxon>
        <taxon>Hominidae</taxon>
        <taxon>Pongo</taxon>
    </lineage>
</organism>
<keyword id="KW-0007">Acetylation</keyword>
<keyword id="KW-0030">Aminoacyl-tRNA synthetase</keyword>
<keyword id="KW-0067">ATP-binding</keyword>
<keyword id="KW-0963">Cytoplasm</keyword>
<keyword id="KW-0436">Ligase</keyword>
<keyword id="KW-0547">Nucleotide-binding</keyword>
<keyword id="KW-0539">Nucleus</keyword>
<keyword id="KW-0597">Phosphoprotein</keyword>
<keyword id="KW-0648">Protein biosynthesis</keyword>
<keyword id="KW-1185">Reference proteome</keyword>
<keyword id="KW-0694">RNA-binding</keyword>
<keyword id="KW-0820">tRNA-binding</keyword>
<comment type="function">
    <text evidence="1">Tyrosine--tRNA ligase that catalyzes the attachment of tyrosine to tRNA(Tyr) in a two-step reaction: tyrosine is first activated by ATP to form Tyr-AMP and then transferred to the acceptor end of tRNA(Tyr). Also acts as a positive regulator of poly-ADP-ribosylation in the nucleus, independently of its tyrosine--tRNA ligase activity. Activity is switched upon resveratrol-binding: resveratrol strongly inhibits the tyrosine--tRNA ligase activity and promotes relocalization to the nucleus, where YARS1 specifically stimulates the poly-ADP-ribosyltransferase activity of PARP1.</text>
</comment>
<comment type="catalytic activity">
    <reaction evidence="1">
        <text>tRNA(Tyr) + L-tyrosine + ATP = L-tyrosyl-tRNA(Tyr) + AMP + diphosphate + H(+)</text>
        <dbReference type="Rhea" id="RHEA:10220"/>
        <dbReference type="Rhea" id="RHEA-COMP:9706"/>
        <dbReference type="Rhea" id="RHEA-COMP:9707"/>
        <dbReference type="ChEBI" id="CHEBI:15378"/>
        <dbReference type="ChEBI" id="CHEBI:30616"/>
        <dbReference type="ChEBI" id="CHEBI:33019"/>
        <dbReference type="ChEBI" id="CHEBI:58315"/>
        <dbReference type="ChEBI" id="CHEBI:78442"/>
        <dbReference type="ChEBI" id="CHEBI:78536"/>
        <dbReference type="ChEBI" id="CHEBI:456215"/>
        <dbReference type="EC" id="6.1.1.1"/>
    </reaction>
    <physiologicalReaction direction="left-to-right" evidence="1">
        <dbReference type="Rhea" id="RHEA:10221"/>
    </physiologicalReaction>
</comment>
<comment type="activity regulation">
    <text evidence="1">Resveratrol strongly inhibits the tyrosine--tRNA ligase activity.</text>
</comment>
<comment type="subunit">
    <text evidence="1">Homodimer. Interacts (when binding to resveratrol) with PARP1; interaction stimulates the poly-ADP-ribosyltransferase activity of PARP1.</text>
</comment>
<comment type="subcellular location">
    <subcellularLocation>
        <location evidence="1">Cytoplasm</location>
    </subcellularLocation>
    <subcellularLocation>
        <location evidence="1">Nucleus</location>
    </subcellularLocation>
    <text evidence="1">Cytoplasmic in normal conditions. Resveratrol-binding in response to serum starvation promotes relocalization to the nucleus.</text>
</comment>
<comment type="domain">
    <text evidence="1">The nuclear localization signal, which mediates localization to the nucleus, is also important for interacting with tRNA(Tyr), suggesting that it is sterically blocked when tRNA(Tyr) is bound.</text>
</comment>
<comment type="similarity">
    <text evidence="4">Belongs to the class-I aminoacyl-tRNA synthetase family.</text>
</comment>
<evidence type="ECO:0000250" key="1">
    <source>
        <dbReference type="UniProtKB" id="P54577"/>
    </source>
</evidence>
<evidence type="ECO:0000255" key="2">
    <source>
        <dbReference type="PROSITE-ProRule" id="PRU00209"/>
    </source>
</evidence>
<evidence type="ECO:0000256" key="3">
    <source>
        <dbReference type="SAM" id="MobiDB-lite"/>
    </source>
</evidence>
<evidence type="ECO:0000305" key="4"/>
<feature type="chain" id="PRO_0000423287" description="Tyrosine--tRNA ligase, cytoplasmic">
    <location>
        <begin position="1"/>
        <end position="528"/>
    </location>
</feature>
<feature type="initiator methionine" description="Removed; alternate" evidence="1">
    <location>
        <position position="1"/>
    </location>
</feature>
<feature type="chain" id="PRO_0000239690" description="Tyrosine--tRNA ligase, cytoplasmic, N-terminally processed">
    <location>
        <begin position="2"/>
        <end position="528"/>
    </location>
</feature>
<feature type="domain" description="tRNA-binding" evidence="2">
    <location>
        <begin position="364"/>
        <end position="468"/>
    </location>
</feature>
<feature type="region of interest" description="Disordered" evidence="3">
    <location>
        <begin position="339"/>
        <end position="363"/>
    </location>
</feature>
<feature type="short sequence motif" description="'HIGH' region" evidence="1">
    <location>
        <begin position="44"/>
        <end position="52"/>
    </location>
</feature>
<feature type="short sequence motif" description="'KMSKS' region" evidence="1">
    <location>
        <begin position="222"/>
        <end position="226"/>
    </location>
</feature>
<feature type="short sequence motif" description="Nuclear localization signal" evidence="1">
    <location>
        <begin position="242"/>
        <end position="247"/>
    </location>
</feature>
<feature type="binding site" evidence="1">
    <location>
        <position position="39"/>
    </location>
    <ligand>
        <name>L-tyrosine</name>
        <dbReference type="ChEBI" id="CHEBI:58315"/>
    </ligand>
</feature>
<feature type="binding site" evidence="1">
    <location>
        <position position="39"/>
    </location>
    <ligand>
        <name>trans-resveratrol</name>
        <dbReference type="ChEBI" id="CHEBI:45713"/>
    </ligand>
</feature>
<feature type="binding site" evidence="1">
    <location>
        <position position="166"/>
    </location>
    <ligand>
        <name>L-tyrosine</name>
        <dbReference type="ChEBI" id="CHEBI:58315"/>
    </ligand>
</feature>
<feature type="binding site" evidence="1">
    <location>
        <position position="170"/>
    </location>
    <ligand>
        <name>L-tyrosine</name>
        <dbReference type="ChEBI" id="CHEBI:58315"/>
    </ligand>
</feature>
<feature type="binding site" evidence="1">
    <location>
        <position position="170"/>
    </location>
    <ligand>
        <name>trans-resveratrol</name>
        <dbReference type="ChEBI" id="CHEBI:45713"/>
    </ligand>
</feature>
<feature type="binding site" evidence="1">
    <location>
        <position position="173"/>
    </location>
    <ligand>
        <name>L-tyrosine</name>
        <dbReference type="ChEBI" id="CHEBI:58315"/>
    </ligand>
</feature>
<feature type="binding site" evidence="1">
    <location>
        <position position="173"/>
    </location>
    <ligand>
        <name>trans-resveratrol</name>
        <dbReference type="ChEBI" id="CHEBI:45713"/>
    </ligand>
</feature>
<feature type="binding site" evidence="1">
    <location>
        <position position="188"/>
    </location>
    <ligand>
        <name>L-tyrosine</name>
        <dbReference type="ChEBI" id="CHEBI:58315"/>
    </ligand>
</feature>
<feature type="modified residue" description="N-acetylmethionine" evidence="1">
    <location>
        <position position="1"/>
    </location>
</feature>
<feature type="modified residue" description="N-acetylglycine; in Tyrosine--tRNA ligase, cytoplasmic, N-terminally processed" evidence="1">
    <location>
        <position position="2"/>
    </location>
</feature>
<feature type="modified residue" description="N6-acetyllysine" evidence="1">
    <location>
        <position position="197"/>
    </location>
</feature>
<feature type="modified residue" description="Phosphoserine" evidence="1">
    <location>
        <position position="205"/>
    </location>
</feature>
<feature type="modified residue" description="N6-acetyllysine" evidence="1">
    <location>
        <position position="206"/>
    </location>
</feature>
<feature type="modified residue" description="Phosphoserine" evidence="1">
    <location>
        <position position="386"/>
    </location>
</feature>
<feature type="modified residue" description="N6-acetyllysine" evidence="1">
    <location>
        <position position="474"/>
    </location>
</feature>
<feature type="modified residue" description="N6-acetyllysine" evidence="1">
    <location>
        <position position="482"/>
    </location>
</feature>
<feature type="modified residue" description="N6-acetyllysine" evidence="1">
    <location>
        <position position="490"/>
    </location>
</feature>